<comment type="catalytic activity">
    <reaction evidence="1">
        <text>L-citrulline + L-aspartate + ATP = 2-(N(omega)-L-arginino)succinate + AMP + diphosphate + H(+)</text>
        <dbReference type="Rhea" id="RHEA:10932"/>
        <dbReference type="ChEBI" id="CHEBI:15378"/>
        <dbReference type="ChEBI" id="CHEBI:29991"/>
        <dbReference type="ChEBI" id="CHEBI:30616"/>
        <dbReference type="ChEBI" id="CHEBI:33019"/>
        <dbReference type="ChEBI" id="CHEBI:57472"/>
        <dbReference type="ChEBI" id="CHEBI:57743"/>
        <dbReference type="ChEBI" id="CHEBI:456215"/>
        <dbReference type="EC" id="6.3.4.5"/>
    </reaction>
</comment>
<comment type="pathway">
    <text evidence="1">Amino-acid biosynthesis; L-arginine biosynthesis; L-arginine from L-ornithine and carbamoyl phosphate: step 2/3.</text>
</comment>
<comment type="subunit">
    <text evidence="1">Homotetramer.</text>
</comment>
<comment type="subcellular location">
    <subcellularLocation>
        <location evidence="1">Cytoplasm</location>
    </subcellularLocation>
</comment>
<comment type="similarity">
    <text evidence="1">Belongs to the argininosuccinate synthase family. Type 2 subfamily.</text>
</comment>
<dbReference type="EC" id="6.3.4.5" evidence="1"/>
<dbReference type="EMBL" id="CP000152">
    <property type="protein sequence ID" value="ABB12510.1"/>
    <property type="molecule type" value="Genomic_DNA"/>
</dbReference>
<dbReference type="RefSeq" id="WP_011355992.1">
    <property type="nucleotide sequence ID" value="NZ_WNDV01000006.1"/>
</dbReference>
<dbReference type="SMR" id="Q392V6"/>
<dbReference type="GeneID" id="45098721"/>
<dbReference type="KEGG" id="bur:Bcep18194_B2399"/>
<dbReference type="PATRIC" id="fig|482957.22.peg.6176"/>
<dbReference type="HOGENOM" id="CLU_032784_4_1_4"/>
<dbReference type="UniPathway" id="UPA00068">
    <property type="reaction ID" value="UER00113"/>
</dbReference>
<dbReference type="Proteomes" id="UP000002705">
    <property type="component" value="Chromosome 2"/>
</dbReference>
<dbReference type="GO" id="GO:0005737">
    <property type="term" value="C:cytoplasm"/>
    <property type="evidence" value="ECO:0007669"/>
    <property type="project" value="UniProtKB-SubCell"/>
</dbReference>
<dbReference type="GO" id="GO:0004055">
    <property type="term" value="F:argininosuccinate synthase activity"/>
    <property type="evidence" value="ECO:0007669"/>
    <property type="project" value="UniProtKB-UniRule"/>
</dbReference>
<dbReference type="GO" id="GO:0005524">
    <property type="term" value="F:ATP binding"/>
    <property type="evidence" value="ECO:0007669"/>
    <property type="project" value="UniProtKB-UniRule"/>
</dbReference>
<dbReference type="GO" id="GO:0042803">
    <property type="term" value="F:protein homodimerization activity"/>
    <property type="evidence" value="ECO:0007669"/>
    <property type="project" value="InterPro"/>
</dbReference>
<dbReference type="GO" id="GO:0000053">
    <property type="term" value="P:argininosuccinate metabolic process"/>
    <property type="evidence" value="ECO:0007669"/>
    <property type="project" value="TreeGrafter"/>
</dbReference>
<dbReference type="GO" id="GO:0006526">
    <property type="term" value="P:L-arginine biosynthetic process"/>
    <property type="evidence" value="ECO:0007669"/>
    <property type="project" value="UniProtKB-UniRule"/>
</dbReference>
<dbReference type="GO" id="GO:0000050">
    <property type="term" value="P:urea cycle"/>
    <property type="evidence" value="ECO:0007669"/>
    <property type="project" value="TreeGrafter"/>
</dbReference>
<dbReference type="CDD" id="cd01999">
    <property type="entry name" value="ASS"/>
    <property type="match status" value="1"/>
</dbReference>
<dbReference type="FunFam" id="1.10.287.400:FF:000001">
    <property type="entry name" value="Argininosuccinate synthase"/>
    <property type="match status" value="1"/>
</dbReference>
<dbReference type="Gene3D" id="1.10.287.400">
    <property type="match status" value="1"/>
</dbReference>
<dbReference type="Gene3D" id="3.90.1260.10">
    <property type="entry name" value="Argininosuccinate synthetase, chain A, domain 2"/>
    <property type="match status" value="1"/>
</dbReference>
<dbReference type="Gene3D" id="3.40.50.620">
    <property type="entry name" value="HUPs"/>
    <property type="match status" value="1"/>
</dbReference>
<dbReference type="HAMAP" id="MF_00581">
    <property type="entry name" value="Arg_succ_synth_type2"/>
    <property type="match status" value="1"/>
</dbReference>
<dbReference type="InterPro" id="IPR023437">
    <property type="entry name" value="Arg_succ_synth_type2_subfam"/>
</dbReference>
<dbReference type="InterPro" id="IPR048268">
    <property type="entry name" value="Arginosuc_syn_C"/>
</dbReference>
<dbReference type="InterPro" id="IPR048267">
    <property type="entry name" value="Arginosuc_syn_N"/>
</dbReference>
<dbReference type="InterPro" id="IPR001518">
    <property type="entry name" value="Arginosuc_synth"/>
</dbReference>
<dbReference type="InterPro" id="IPR018223">
    <property type="entry name" value="Arginosuc_synth_CS"/>
</dbReference>
<dbReference type="InterPro" id="IPR023434">
    <property type="entry name" value="Arginosuc_synth_type_1_subfam"/>
</dbReference>
<dbReference type="InterPro" id="IPR024074">
    <property type="entry name" value="AS_cat/multimer_dom_body"/>
</dbReference>
<dbReference type="InterPro" id="IPR024073">
    <property type="entry name" value="AS_multimer_C_tail"/>
</dbReference>
<dbReference type="InterPro" id="IPR014729">
    <property type="entry name" value="Rossmann-like_a/b/a_fold"/>
</dbReference>
<dbReference type="NCBIfam" id="TIGR00032">
    <property type="entry name" value="argG"/>
    <property type="match status" value="1"/>
</dbReference>
<dbReference type="NCBIfam" id="NF003779">
    <property type="entry name" value="PRK05370.1"/>
    <property type="match status" value="1"/>
</dbReference>
<dbReference type="PANTHER" id="PTHR11587">
    <property type="entry name" value="ARGININOSUCCINATE SYNTHASE"/>
    <property type="match status" value="1"/>
</dbReference>
<dbReference type="PANTHER" id="PTHR11587:SF2">
    <property type="entry name" value="ARGININOSUCCINATE SYNTHASE"/>
    <property type="match status" value="1"/>
</dbReference>
<dbReference type="Pfam" id="PF20979">
    <property type="entry name" value="Arginosuc_syn_C"/>
    <property type="match status" value="1"/>
</dbReference>
<dbReference type="Pfam" id="PF00764">
    <property type="entry name" value="Arginosuc_synth"/>
    <property type="match status" value="1"/>
</dbReference>
<dbReference type="SUPFAM" id="SSF52402">
    <property type="entry name" value="Adenine nucleotide alpha hydrolases-like"/>
    <property type="match status" value="1"/>
</dbReference>
<dbReference type="SUPFAM" id="SSF69864">
    <property type="entry name" value="Argininosuccinate synthetase, C-terminal domain"/>
    <property type="match status" value="1"/>
</dbReference>
<dbReference type="PROSITE" id="PS00564">
    <property type="entry name" value="ARGININOSUCCIN_SYN_1"/>
    <property type="match status" value="1"/>
</dbReference>
<dbReference type="PROSITE" id="PS00565">
    <property type="entry name" value="ARGININOSUCCIN_SYN_2"/>
    <property type="match status" value="1"/>
</dbReference>
<sequence>MSTILESLPTGQKVGIAFSGGLDTSAALHWMKLKGAVPYAYTANLGQPDEDDYDAIPKRAIEYGAAGARLIDCRAQLVAEGIAALQSGAFHITTAGVTYFNTTPIGRAVTGTMLVAAMKEDGVNIWGDGSTYKGNDIERFYRYGLLVNPDLKIYKPWLDQTFIDELGGRAEMSEFMNQAGFAYKMSAEKAYSTDSNLLGATHEAKDLESLESGIKIVNPIMGVAFWRDDVKIAAEEVTVRFEAGQPVALNGVEFSDPVELLLEANRIGGRHGLGMSDQIENRIIEAKSRGIYEAPGLALLYIAYERLVTGIHNEDTIEQYRENGRRLGRLLYQGRWFDPQAIMLRETAQRWVARAITGEVKIELRRGNDYSILSTKSPNLTYQPERLSMEKVASTFSPRDRIGQLTMRNLDITDTRDKLRVYSQVGLLTPGETSALPQIKGDDK</sequence>
<organism>
    <name type="scientific">Burkholderia lata (strain ATCC 17760 / DSM 23089 / LMG 22485 / NCIMB 9086 / R18194 / 383)</name>
    <dbReference type="NCBI Taxonomy" id="482957"/>
    <lineage>
        <taxon>Bacteria</taxon>
        <taxon>Pseudomonadati</taxon>
        <taxon>Pseudomonadota</taxon>
        <taxon>Betaproteobacteria</taxon>
        <taxon>Burkholderiales</taxon>
        <taxon>Burkholderiaceae</taxon>
        <taxon>Burkholderia</taxon>
        <taxon>Burkholderia cepacia complex</taxon>
    </lineage>
</organism>
<evidence type="ECO:0000255" key="1">
    <source>
        <dbReference type="HAMAP-Rule" id="MF_00581"/>
    </source>
</evidence>
<reference key="1">
    <citation type="submission" date="2005-10" db="EMBL/GenBank/DDBJ databases">
        <title>Complete sequence of chromosome 2 of Burkholderia sp. 383.</title>
        <authorList>
            <consortium name="US DOE Joint Genome Institute"/>
            <person name="Copeland A."/>
            <person name="Lucas S."/>
            <person name="Lapidus A."/>
            <person name="Barry K."/>
            <person name="Detter J.C."/>
            <person name="Glavina T."/>
            <person name="Hammon N."/>
            <person name="Israni S."/>
            <person name="Pitluck S."/>
            <person name="Chain P."/>
            <person name="Malfatti S."/>
            <person name="Shin M."/>
            <person name="Vergez L."/>
            <person name="Schmutz J."/>
            <person name="Larimer F."/>
            <person name="Land M."/>
            <person name="Kyrpides N."/>
            <person name="Lykidis A."/>
            <person name="Richardson P."/>
        </authorList>
    </citation>
    <scope>NUCLEOTIDE SEQUENCE [LARGE SCALE GENOMIC DNA]</scope>
    <source>
        <strain>ATCC 17760 / DSM 23089 / LMG 22485 / NCIMB 9086 / R18194 / 383</strain>
    </source>
</reference>
<feature type="chain" id="PRO_1000129743" description="Argininosuccinate synthase">
    <location>
        <begin position="1"/>
        <end position="444"/>
    </location>
</feature>
<feature type="binding site" evidence="1">
    <location>
        <begin position="17"/>
        <end position="25"/>
    </location>
    <ligand>
        <name>ATP</name>
        <dbReference type="ChEBI" id="CHEBI:30616"/>
    </ligand>
</feature>
<feature type="binding site" evidence="1">
    <location>
        <position position="43"/>
    </location>
    <ligand>
        <name>ATP</name>
        <dbReference type="ChEBI" id="CHEBI:30616"/>
    </ligand>
</feature>
<feature type="binding site" evidence="1">
    <location>
        <position position="99"/>
    </location>
    <ligand>
        <name>L-citrulline</name>
        <dbReference type="ChEBI" id="CHEBI:57743"/>
    </ligand>
</feature>
<feature type="binding site" evidence="1">
    <location>
        <position position="129"/>
    </location>
    <ligand>
        <name>ATP</name>
        <dbReference type="ChEBI" id="CHEBI:30616"/>
    </ligand>
</feature>
<feature type="binding site" evidence="1">
    <location>
        <position position="131"/>
    </location>
    <ligand>
        <name>ATP</name>
        <dbReference type="ChEBI" id="CHEBI:30616"/>
    </ligand>
</feature>
<feature type="binding site" evidence="1">
    <location>
        <position position="131"/>
    </location>
    <ligand>
        <name>L-aspartate</name>
        <dbReference type="ChEBI" id="CHEBI:29991"/>
    </ligand>
</feature>
<feature type="binding site" evidence="1">
    <location>
        <position position="135"/>
    </location>
    <ligand>
        <name>L-aspartate</name>
        <dbReference type="ChEBI" id="CHEBI:29991"/>
    </ligand>
</feature>
<feature type="binding site" evidence="1">
    <location>
        <position position="135"/>
    </location>
    <ligand>
        <name>L-citrulline</name>
        <dbReference type="ChEBI" id="CHEBI:57743"/>
    </ligand>
</feature>
<feature type="binding site" evidence="1">
    <location>
        <position position="136"/>
    </location>
    <ligand>
        <name>ATP</name>
        <dbReference type="ChEBI" id="CHEBI:30616"/>
    </ligand>
</feature>
<feature type="binding site" evidence="1">
    <location>
        <position position="136"/>
    </location>
    <ligand>
        <name>L-aspartate</name>
        <dbReference type="ChEBI" id="CHEBI:29991"/>
    </ligand>
</feature>
<feature type="binding site" evidence="1">
    <location>
        <position position="139"/>
    </location>
    <ligand>
        <name>L-citrulline</name>
        <dbReference type="ChEBI" id="CHEBI:57743"/>
    </ligand>
</feature>
<feature type="binding site" evidence="1">
    <location>
        <position position="192"/>
    </location>
    <ligand>
        <name>L-citrulline</name>
        <dbReference type="ChEBI" id="CHEBI:57743"/>
    </ligand>
</feature>
<feature type="binding site" evidence="1">
    <location>
        <position position="194"/>
    </location>
    <ligand>
        <name>ATP</name>
        <dbReference type="ChEBI" id="CHEBI:30616"/>
    </ligand>
</feature>
<feature type="binding site" evidence="1">
    <location>
        <position position="201"/>
    </location>
    <ligand>
        <name>L-citrulline</name>
        <dbReference type="ChEBI" id="CHEBI:57743"/>
    </ligand>
</feature>
<feature type="binding site" evidence="1">
    <location>
        <position position="203"/>
    </location>
    <ligand>
        <name>L-citrulline</name>
        <dbReference type="ChEBI" id="CHEBI:57743"/>
    </ligand>
</feature>
<feature type="binding site" evidence="1">
    <location>
        <position position="280"/>
    </location>
    <ligand>
        <name>L-citrulline</name>
        <dbReference type="ChEBI" id="CHEBI:57743"/>
    </ligand>
</feature>
<protein>
    <recommendedName>
        <fullName evidence="1">Argininosuccinate synthase</fullName>
        <ecNumber evidence="1">6.3.4.5</ecNumber>
    </recommendedName>
    <alternativeName>
        <fullName evidence="1">Citrulline--aspartate ligase</fullName>
    </alternativeName>
</protein>
<keyword id="KW-0028">Amino-acid biosynthesis</keyword>
<keyword id="KW-0055">Arginine biosynthesis</keyword>
<keyword id="KW-0067">ATP-binding</keyword>
<keyword id="KW-0963">Cytoplasm</keyword>
<keyword id="KW-0436">Ligase</keyword>
<keyword id="KW-0547">Nucleotide-binding</keyword>
<accession>Q392V6</accession>
<gene>
    <name evidence="1" type="primary">argG</name>
    <name type="ordered locus">Bcep18194_B2399</name>
</gene>
<proteinExistence type="inferred from homology"/>
<name>ASSY_BURL3</name>